<proteinExistence type="inferred from homology"/>
<name>GLO2_ALIFM</name>
<sequence>MLSVKSIPAFNDNYIWLIHNNDNHCVVVDPGDATPVLECIKEHDFILDAILITHHHHDHIGGVPELVRQFPSVNVVGPENEPIPTLTHPVGDGDFVELFDEQFMVLGVPGHTNGHVAYVGDEKLFCGDALFSAGCGRLFEGTAEQMFNSLQKMAALPDETEVYCAHEYTASNLAFALAVEPDNDYLLRYREKVLHLRAHGKSTIPSTLQREKLINPFLRTSEANVKKSVASKVQDSTEVEIFTALRRWKDEF</sequence>
<accession>B5F9V3</accession>
<evidence type="ECO:0000255" key="1">
    <source>
        <dbReference type="HAMAP-Rule" id="MF_01374"/>
    </source>
</evidence>
<comment type="function">
    <text evidence="1">Thiolesterase that catalyzes the hydrolysis of S-D-lactoyl-glutathione to form glutathione and D-lactic acid.</text>
</comment>
<comment type="catalytic activity">
    <reaction evidence="1">
        <text>an S-(2-hydroxyacyl)glutathione + H2O = a 2-hydroxy carboxylate + glutathione + H(+)</text>
        <dbReference type="Rhea" id="RHEA:21864"/>
        <dbReference type="ChEBI" id="CHEBI:15377"/>
        <dbReference type="ChEBI" id="CHEBI:15378"/>
        <dbReference type="ChEBI" id="CHEBI:57925"/>
        <dbReference type="ChEBI" id="CHEBI:58896"/>
        <dbReference type="ChEBI" id="CHEBI:71261"/>
        <dbReference type="EC" id="3.1.2.6"/>
    </reaction>
</comment>
<comment type="cofactor">
    <cofactor evidence="1">
        <name>Zn(2+)</name>
        <dbReference type="ChEBI" id="CHEBI:29105"/>
    </cofactor>
    <text evidence="1">Binds 2 Zn(2+) ions per subunit.</text>
</comment>
<comment type="pathway">
    <text evidence="1">Secondary metabolite metabolism; methylglyoxal degradation; (R)-lactate from methylglyoxal: step 2/2.</text>
</comment>
<comment type="subunit">
    <text evidence="1">Monomer.</text>
</comment>
<comment type="similarity">
    <text evidence="1">Belongs to the metallo-beta-lactamase superfamily. Glyoxalase II family.</text>
</comment>
<dbReference type="EC" id="3.1.2.6" evidence="1"/>
<dbReference type="EMBL" id="CP001139">
    <property type="protein sequence ID" value="ACH66759.1"/>
    <property type="molecule type" value="Genomic_DNA"/>
</dbReference>
<dbReference type="RefSeq" id="WP_012533963.1">
    <property type="nucleotide sequence ID" value="NC_011184.1"/>
</dbReference>
<dbReference type="SMR" id="B5F9V3"/>
<dbReference type="KEGG" id="vfm:VFMJ11_2073"/>
<dbReference type="HOGENOM" id="CLU_030571_4_1_6"/>
<dbReference type="UniPathway" id="UPA00619">
    <property type="reaction ID" value="UER00676"/>
</dbReference>
<dbReference type="Proteomes" id="UP000001857">
    <property type="component" value="Chromosome I"/>
</dbReference>
<dbReference type="GO" id="GO:0004416">
    <property type="term" value="F:hydroxyacylglutathione hydrolase activity"/>
    <property type="evidence" value="ECO:0007669"/>
    <property type="project" value="UniProtKB-UniRule"/>
</dbReference>
<dbReference type="GO" id="GO:0046872">
    <property type="term" value="F:metal ion binding"/>
    <property type="evidence" value="ECO:0007669"/>
    <property type="project" value="UniProtKB-KW"/>
</dbReference>
<dbReference type="GO" id="GO:0019243">
    <property type="term" value="P:methylglyoxal catabolic process to D-lactate via S-lactoyl-glutathione"/>
    <property type="evidence" value="ECO:0007669"/>
    <property type="project" value="InterPro"/>
</dbReference>
<dbReference type="CDD" id="cd07723">
    <property type="entry name" value="hydroxyacylglutathione_hydrolase_MBL-fold"/>
    <property type="match status" value="1"/>
</dbReference>
<dbReference type="Gene3D" id="3.60.15.10">
    <property type="entry name" value="Ribonuclease Z/Hydroxyacylglutathione hydrolase-like"/>
    <property type="match status" value="1"/>
</dbReference>
<dbReference type="HAMAP" id="MF_01374">
    <property type="entry name" value="Glyoxalase_2"/>
    <property type="match status" value="1"/>
</dbReference>
<dbReference type="InterPro" id="IPR035680">
    <property type="entry name" value="Clx_II_MBL"/>
</dbReference>
<dbReference type="InterPro" id="IPR050110">
    <property type="entry name" value="Glyoxalase_II_hydrolase"/>
</dbReference>
<dbReference type="InterPro" id="IPR032282">
    <property type="entry name" value="HAGH_C"/>
</dbReference>
<dbReference type="InterPro" id="IPR017782">
    <property type="entry name" value="Hydroxyacylglutathione_Hdrlase"/>
</dbReference>
<dbReference type="InterPro" id="IPR001279">
    <property type="entry name" value="Metallo-B-lactamas"/>
</dbReference>
<dbReference type="InterPro" id="IPR036866">
    <property type="entry name" value="RibonucZ/Hydroxyglut_hydro"/>
</dbReference>
<dbReference type="NCBIfam" id="TIGR03413">
    <property type="entry name" value="GSH_gloB"/>
    <property type="match status" value="1"/>
</dbReference>
<dbReference type="PANTHER" id="PTHR43705">
    <property type="entry name" value="HYDROXYACYLGLUTATHIONE HYDROLASE"/>
    <property type="match status" value="1"/>
</dbReference>
<dbReference type="PANTHER" id="PTHR43705:SF1">
    <property type="entry name" value="HYDROXYACYLGLUTATHIONE HYDROLASE GLOB"/>
    <property type="match status" value="1"/>
</dbReference>
<dbReference type="Pfam" id="PF16123">
    <property type="entry name" value="HAGH_C"/>
    <property type="match status" value="1"/>
</dbReference>
<dbReference type="Pfam" id="PF00753">
    <property type="entry name" value="Lactamase_B"/>
    <property type="match status" value="1"/>
</dbReference>
<dbReference type="PIRSF" id="PIRSF005457">
    <property type="entry name" value="Glx"/>
    <property type="match status" value="1"/>
</dbReference>
<dbReference type="SMART" id="SM00849">
    <property type="entry name" value="Lactamase_B"/>
    <property type="match status" value="1"/>
</dbReference>
<dbReference type="SUPFAM" id="SSF56281">
    <property type="entry name" value="Metallo-hydrolase/oxidoreductase"/>
    <property type="match status" value="1"/>
</dbReference>
<keyword id="KW-0378">Hydrolase</keyword>
<keyword id="KW-0479">Metal-binding</keyword>
<keyword id="KW-0862">Zinc</keyword>
<reference key="1">
    <citation type="submission" date="2008-08" db="EMBL/GenBank/DDBJ databases">
        <title>Complete sequence of Vibrio fischeri strain MJ11.</title>
        <authorList>
            <person name="Mandel M.J."/>
            <person name="Stabb E.V."/>
            <person name="Ruby E.G."/>
            <person name="Ferriera S."/>
            <person name="Johnson J."/>
            <person name="Kravitz S."/>
            <person name="Beeson K."/>
            <person name="Sutton G."/>
            <person name="Rogers Y.-H."/>
            <person name="Friedman R."/>
            <person name="Frazier M."/>
            <person name="Venter J.C."/>
        </authorList>
    </citation>
    <scope>NUCLEOTIDE SEQUENCE [LARGE SCALE GENOMIC DNA]</scope>
    <source>
        <strain>MJ11</strain>
    </source>
</reference>
<gene>
    <name evidence="1" type="primary">gloB</name>
    <name type="ordered locus">VFMJ11_2073</name>
</gene>
<protein>
    <recommendedName>
        <fullName evidence="1">Hydroxyacylglutathione hydrolase</fullName>
        <ecNumber evidence="1">3.1.2.6</ecNumber>
    </recommendedName>
    <alternativeName>
        <fullName evidence="1">Glyoxalase II</fullName>
        <shortName evidence="1">Glx II</shortName>
    </alternativeName>
</protein>
<organism>
    <name type="scientific">Aliivibrio fischeri (strain MJ11)</name>
    <name type="common">Vibrio fischeri</name>
    <dbReference type="NCBI Taxonomy" id="388396"/>
    <lineage>
        <taxon>Bacteria</taxon>
        <taxon>Pseudomonadati</taxon>
        <taxon>Pseudomonadota</taxon>
        <taxon>Gammaproteobacteria</taxon>
        <taxon>Vibrionales</taxon>
        <taxon>Vibrionaceae</taxon>
        <taxon>Aliivibrio</taxon>
    </lineage>
</organism>
<feature type="chain" id="PRO_1000144819" description="Hydroxyacylglutathione hydrolase">
    <location>
        <begin position="1"/>
        <end position="252"/>
    </location>
</feature>
<feature type="binding site" evidence="1">
    <location>
        <position position="54"/>
    </location>
    <ligand>
        <name>Zn(2+)</name>
        <dbReference type="ChEBI" id="CHEBI:29105"/>
        <label>1</label>
    </ligand>
</feature>
<feature type="binding site" evidence="1">
    <location>
        <position position="56"/>
    </location>
    <ligand>
        <name>Zn(2+)</name>
        <dbReference type="ChEBI" id="CHEBI:29105"/>
        <label>1</label>
    </ligand>
</feature>
<feature type="binding site" evidence="1">
    <location>
        <position position="58"/>
    </location>
    <ligand>
        <name>Zn(2+)</name>
        <dbReference type="ChEBI" id="CHEBI:29105"/>
        <label>2</label>
    </ligand>
</feature>
<feature type="binding site" evidence="1">
    <location>
        <position position="59"/>
    </location>
    <ligand>
        <name>Zn(2+)</name>
        <dbReference type="ChEBI" id="CHEBI:29105"/>
        <label>2</label>
    </ligand>
</feature>
<feature type="binding site" evidence="1">
    <location>
        <position position="111"/>
    </location>
    <ligand>
        <name>Zn(2+)</name>
        <dbReference type="ChEBI" id="CHEBI:29105"/>
        <label>1</label>
    </ligand>
</feature>
<feature type="binding site" evidence="1">
    <location>
        <position position="128"/>
    </location>
    <ligand>
        <name>Zn(2+)</name>
        <dbReference type="ChEBI" id="CHEBI:29105"/>
        <label>1</label>
    </ligand>
</feature>
<feature type="binding site" evidence="1">
    <location>
        <position position="128"/>
    </location>
    <ligand>
        <name>Zn(2+)</name>
        <dbReference type="ChEBI" id="CHEBI:29105"/>
        <label>2</label>
    </ligand>
</feature>
<feature type="binding site" evidence="1">
    <location>
        <position position="166"/>
    </location>
    <ligand>
        <name>Zn(2+)</name>
        <dbReference type="ChEBI" id="CHEBI:29105"/>
        <label>2</label>
    </ligand>
</feature>